<name>RL3_MYCPA</name>
<keyword id="KW-1185">Reference proteome</keyword>
<keyword id="KW-0687">Ribonucleoprotein</keyword>
<keyword id="KW-0689">Ribosomal protein</keyword>
<keyword id="KW-0694">RNA-binding</keyword>
<keyword id="KW-0699">rRNA-binding</keyword>
<feature type="chain" id="PRO_0000241367" description="Large ribosomal subunit protein uL3">
    <location>
        <begin position="1"/>
        <end position="217"/>
    </location>
</feature>
<dbReference type="EMBL" id="AE016958">
    <property type="protein sequence ID" value="AAS06711.1"/>
    <property type="molecule type" value="Genomic_DNA"/>
</dbReference>
<dbReference type="RefSeq" id="WP_003873518.1">
    <property type="nucleotide sequence ID" value="NZ_CP106873.1"/>
</dbReference>
<dbReference type="SMR" id="Q73SB3"/>
<dbReference type="STRING" id="262316.MAP_4161"/>
<dbReference type="GeneID" id="75271985"/>
<dbReference type="KEGG" id="mpa:MAP_4161"/>
<dbReference type="eggNOG" id="COG0087">
    <property type="taxonomic scope" value="Bacteria"/>
</dbReference>
<dbReference type="HOGENOM" id="CLU_044142_4_1_11"/>
<dbReference type="Proteomes" id="UP000000580">
    <property type="component" value="Chromosome"/>
</dbReference>
<dbReference type="GO" id="GO:0022625">
    <property type="term" value="C:cytosolic large ribosomal subunit"/>
    <property type="evidence" value="ECO:0007669"/>
    <property type="project" value="TreeGrafter"/>
</dbReference>
<dbReference type="GO" id="GO:0019843">
    <property type="term" value="F:rRNA binding"/>
    <property type="evidence" value="ECO:0007669"/>
    <property type="project" value="UniProtKB-UniRule"/>
</dbReference>
<dbReference type="GO" id="GO:0003735">
    <property type="term" value="F:structural constituent of ribosome"/>
    <property type="evidence" value="ECO:0007669"/>
    <property type="project" value="InterPro"/>
</dbReference>
<dbReference type="GO" id="GO:0006412">
    <property type="term" value="P:translation"/>
    <property type="evidence" value="ECO:0007669"/>
    <property type="project" value="UniProtKB-UniRule"/>
</dbReference>
<dbReference type="FunFam" id="2.40.30.10:FF:000004">
    <property type="entry name" value="50S ribosomal protein L3"/>
    <property type="match status" value="1"/>
</dbReference>
<dbReference type="FunFam" id="3.30.160.810:FF:000001">
    <property type="entry name" value="50S ribosomal protein L3"/>
    <property type="match status" value="1"/>
</dbReference>
<dbReference type="Gene3D" id="3.30.160.810">
    <property type="match status" value="1"/>
</dbReference>
<dbReference type="Gene3D" id="2.40.30.10">
    <property type="entry name" value="Translation factors"/>
    <property type="match status" value="1"/>
</dbReference>
<dbReference type="HAMAP" id="MF_01325_B">
    <property type="entry name" value="Ribosomal_uL3_B"/>
    <property type="match status" value="1"/>
</dbReference>
<dbReference type="InterPro" id="IPR000597">
    <property type="entry name" value="Ribosomal_uL3"/>
</dbReference>
<dbReference type="InterPro" id="IPR019927">
    <property type="entry name" value="Ribosomal_uL3_bac/org-type"/>
</dbReference>
<dbReference type="InterPro" id="IPR019926">
    <property type="entry name" value="Ribosomal_uL3_CS"/>
</dbReference>
<dbReference type="InterPro" id="IPR009000">
    <property type="entry name" value="Transl_B-barrel_sf"/>
</dbReference>
<dbReference type="NCBIfam" id="TIGR03625">
    <property type="entry name" value="L3_bact"/>
    <property type="match status" value="1"/>
</dbReference>
<dbReference type="PANTHER" id="PTHR11229">
    <property type="entry name" value="50S RIBOSOMAL PROTEIN L3"/>
    <property type="match status" value="1"/>
</dbReference>
<dbReference type="PANTHER" id="PTHR11229:SF16">
    <property type="entry name" value="LARGE RIBOSOMAL SUBUNIT PROTEIN UL3C"/>
    <property type="match status" value="1"/>
</dbReference>
<dbReference type="Pfam" id="PF00297">
    <property type="entry name" value="Ribosomal_L3"/>
    <property type="match status" value="1"/>
</dbReference>
<dbReference type="SUPFAM" id="SSF50447">
    <property type="entry name" value="Translation proteins"/>
    <property type="match status" value="1"/>
</dbReference>
<dbReference type="PROSITE" id="PS00474">
    <property type="entry name" value="RIBOSOMAL_L3"/>
    <property type="match status" value="1"/>
</dbReference>
<protein>
    <recommendedName>
        <fullName evidence="1">Large ribosomal subunit protein uL3</fullName>
    </recommendedName>
    <alternativeName>
        <fullName evidence="2">50S ribosomal protein L3</fullName>
    </alternativeName>
</protein>
<reference key="1">
    <citation type="journal article" date="2005" name="Proc. Natl. Acad. Sci. U.S.A.">
        <title>The complete genome sequence of Mycobacterium avium subspecies paratuberculosis.</title>
        <authorList>
            <person name="Li L."/>
            <person name="Bannantine J.P."/>
            <person name="Zhang Q."/>
            <person name="Amonsin A."/>
            <person name="May B.J."/>
            <person name="Alt D."/>
            <person name="Banerji N."/>
            <person name="Kanjilal S."/>
            <person name="Kapur V."/>
        </authorList>
    </citation>
    <scope>NUCLEOTIDE SEQUENCE [LARGE SCALE GENOMIC DNA]</scope>
    <source>
        <strain>ATCC BAA-968 / K-10</strain>
    </source>
</reference>
<comment type="function">
    <text evidence="1">One of the primary rRNA binding proteins, it binds directly near the 3'-end of the 23S rRNA, where it nucleates assembly of the 50S subunit.</text>
</comment>
<comment type="subunit">
    <text evidence="1">Part of the 50S ribosomal subunit. Forms a cluster with proteins L14 and L19.</text>
</comment>
<comment type="similarity">
    <text evidence="1">Belongs to the universal ribosomal protein uL3 family.</text>
</comment>
<proteinExistence type="inferred from homology"/>
<organism>
    <name type="scientific">Mycolicibacterium paratuberculosis (strain ATCC BAA-968 / K-10)</name>
    <name type="common">Mycobacterium paratuberculosis</name>
    <dbReference type="NCBI Taxonomy" id="262316"/>
    <lineage>
        <taxon>Bacteria</taxon>
        <taxon>Bacillati</taxon>
        <taxon>Actinomycetota</taxon>
        <taxon>Actinomycetes</taxon>
        <taxon>Mycobacteriales</taxon>
        <taxon>Mycobacteriaceae</taxon>
        <taxon>Mycobacterium</taxon>
        <taxon>Mycobacterium avium complex (MAC)</taxon>
    </lineage>
</organism>
<evidence type="ECO:0000255" key="1">
    <source>
        <dbReference type="HAMAP-Rule" id="MF_01325"/>
    </source>
</evidence>
<evidence type="ECO:0000305" key="2"/>
<gene>
    <name evidence="1" type="primary">rplC</name>
    <name type="ordered locus">MAP_4161</name>
</gene>
<sequence length="217" mass="23083">MARKGILGTKLGMTQVFDENNRVVPVTVVKAGPNVVTRIRTPEQDGYSAVQLAYGEISPRKVNKPVTGQYAAAGINPRRFLAELRLDNPDAAAEYQVGQELTAEIFTDGSYVDVTGTSKGKGFAGTMKRHGFRGQGASHGAQAVHRRPGSIGGCATPARVFKGTRMAGRMGNDRVTVQNLLVHKVDTENGVLLIKGAVPGRTGGLVMVRSAVKRGEK</sequence>
<accession>Q73SB3</accession>